<gene>
    <name evidence="1" type="primary">alaS</name>
    <name type="ordered locus">BALH_3972</name>
</gene>
<comment type="function">
    <text evidence="1">Catalyzes the attachment of alanine to tRNA(Ala) in a two-step reaction: alanine is first activated by ATP to form Ala-AMP and then transferred to the acceptor end of tRNA(Ala). Also edits incorrectly charged Ser-tRNA(Ala) and Gly-tRNA(Ala) via its editing domain.</text>
</comment>
<comment type="catalytic activity">
    <reaction evidence="1">
        <text>tRNA(Ala) + L-alanine + ATP = L-alanyl-tRNA(Ala) + AMP + diphosphate</text>
        <dbReference type="Rhea" id="RHEA:12540"/>
        <dbReference type="Rhea" id="RHEA-COMP:9657"/>
        <dbReference type="Rhea" id="RHEA-COMP:9923"/>
        <dbReference type="ChEBI" id="CHEBI:30616"/>
        <dbReference type="ChEBI" id="CHEBI:33019"/>
        <dbReference type="ChEBI" id="CHEBI:57972"/>
        <dbReference type="ChEBI" id="CHEBI:78442"/>
        <dbReference type="ChEBI" id="CHEBI:78497"/>
        <dbReference type="ChEBI" id="CHEBI:456215"/>
        <dbReference type="EC" id="6.1.1.7"/>
    </reaction>
</comment>
<comment type="cofactor">
    <cofactor evidence="1">
        <name>Zn(2+)</name>
        <dbReference type="ChEBI" id="CHEBI:29105"/>
    </cofactor>
    <text evidence="1">Binds 1 zinc ion per subunit.</text>
</comment>
<comment type="subcellular location">
    <subcellularLocation>
        <location evidence="1">Cytoplasm</location>
    </subcellularLocation>
</comment>
<comment type="domain">
    <text evidence="1">Consists of three domains; the N-terminal catalytic domain, the editing domain and the C-terminal C-Ala domain. The editing domain removes incorrectly charged amino acids, while the C-Ala domain, along with tRNA(Ala), serves as a bridge to cooperatively bring together the editing and aminoacylation centers thus stimulating deacylation of misacylated tRNAs.</text>
</comment>
<comment type="similarity">
    <text evidence="1">Belongs to the class-II aminoacyl-tRNA synthetase family.</text>
</comment>
<feature type="chain" id="PRO_0000347500" description="Alanine--tRNA ligase">
    <location>
        <begin position="1"/>
        <end position="880"/>
    </location>
</feature>
<feature type="binding site" evidence="1">
    <location>
        <position position="567"/>
    </location>
    <ligand>
        <name>Zn(2+)</name>
        <dbReference type="ChEBI" id="CHEBI:29105"/>
    </ligand>
</feature>
<feature type="binding site" evidence="1">
    <location>
        <position position="571"/>
    </location>
    <ligand>
        <name>Zn(2+)</name>
        <dbReference type="ChEBI" id="CHEBI:29105"/>
    </ligand>
</feature>
<feature type="binding site" evidence="1">
    <location>
        <position position="669"/>
    </location>
    <ligand>
        <name>Zn(2+)</name>
        <dbReference type="ChEBI" id="CHEBI:29105"/>
    </ligand>
</feature>
<feature type="binding site" evidence="1">
    <location>
        <position position="673"/>
    </location>
    <ligand>
        <name>Zn(2+)</name>
        <dbReference type="ChEBI" id="CHEBI:29105"/>
    </ligand>
</feature>
<sequence>MKQLTGAQIRQMFLDFFQEKGHAVEPSASLVPHEDPSLLWINSGVATLKKYFDGRVIPQNPRITNAQKSIRTNDIENVGKTARHHTFFEMLGNFSIGDYFKEEAITWAWEFLTSDKWIGFDKELLSVTIHPEDEEAFTIWNEKMGVPKERIIRLEENFWDIGEGPSGPNTEIFYDRGEAYGNDFSDPELYPGGENERYLEVWNLVFSQFNHNPDGSYTPLPKKNIDTGMGLERMTSIVQDVPTNFDTDLFMPMIGATETISGEKYRNGDLEKDMAFKVIADHIRTVTFAVGDGALPSNEGRGYVLRRLLRRAVRYSKKLNINRPFMFELVPVVGEVMKDFYPEVLEKKDFIAKVVKNEEERFHETLHDGEAILAEVIAKAKEEKTTVISGVDAFRLYDTYGFPIELTEEYAEEAGMTVDHEGFENEMEKQRERARAARQDVDSMQVQGGVLGEVKVASEFVGYGTVATESNVVALVKNGEYTDSLQVGEEGQLMLDVTPFYAESGGQIADRGYLLADGVKVLVKDVQKAPNGQNLHQVVVEEGTLTKDAAVKAIIDTKNRSSVVKNHTATHLLHQALKDVLGTHVNQAGSLVTSERLRFDFSHFGQVQADELEKIERIVNEKIWESIDVEISQKAIEEAKEMGAMALFGEKYGDVVRVVQVGDYSLELCGGCHVDNTASIGIFKIVAESGIGAGTRRIEAVTGKSAYELMNDQVGLLKEAAGKMKTNPKDILTRVDGLFAEVKQLQKENESLAAKLSNIEAGNLTDSVMTVDGVNVLAAKVNVADMNNLRTMMDDLKNKLESAVVVLASVNDDKVNILAGVTKDLISQGYHAGKLVKEVASRCGGGGGGRPDMAQAGGKNPAQVEEALAFVQEYVKSVSK</sequence>
<accession>A0RJ00</accession>
<organism>
    <name type="scientific">Bacillus thuringiensis (strain Al Hakam)</name>
    <dbReference type="NCBI Taxonomy" id="412694"/>
    <lineage>
        <taxon>Bacteria</taxon>
        <taxon>Bacillati</taxon>
        <taxon>Bacillota</taxon>
        <taxon>Bacilli</taxon>
        <taxon>Bacillales</taxon>
        <taxon>Bacillaceae</taxon>
        <taxon>Bacillus</taxon>
        <taxon>Bacillus cereus group</taxon>
    </lineage>
</organism>
<dbReference type="EC" id="6.1.1.7" evidence="1"/>
<dbReference type="EMBL" id="CP000485">
    <property type="protein sequence ID" value="ABK87193.1"/>
    <property type="molecule type" value="Genomic_DNA"/>
</dbReference>
<dbReference type="RefSeq" id="WP_000811840.1">
    <property type="nucleotide sequence ID" value="NC_008600.1"/>
</dbReference>
<dbReference type="SMR" id="A0RJ00"/>
<dbReference type="KEGG" id="btl:BALH_3972"/>
<dbReference type="HOGENOM" id="CLU_004485_1_1_9"/>
<dbReference type="GO" id="GO:0005829">
    <property type="term" value="C:cytosol"/>
    <property type="evidence" value="ECO:0007669"/>
    <property type="project" value="TreeGrafter"/>
</dbReference>
<dbReference type="GO" id="GO:0004813">
    <property type="term" value="F:alanine-tRNA ligase activity"/>
    <property type="evidence" value="ECO:0007669"/>
    <property type="project" value="UniProtKB-UniRule"/>
</dbReference>
<dbReference type="GO" id="GO:0002161">
    <property type="term" value="F:aminoacyl-tRNA deacylase activity"/>
    <property type="evidence" value="ECO:0007669"/>
    <property type="project" value="TreeGrafter"/>
</dbReference>
<dbReference type="GO" id="GO:0005524">
    <property type="term" value="F:ATP binding"/>
    <property type="evidence" value="ECO:0007669"/>
    <property type="project" value="UniProtKB-UniRule"/>
</dbReference>
<dbReference type="GO" id="GO:0140096">
    <property type="term" value="F:catalytic activity, acting on a protein"/>
    <property type="evidence" value="ECO:0007669"/>
    <property type="project" value="UniProtKB-ARBA"/>
</dbReference>
<dbReference type="GO" id="GO:0016740">
    <property type="term" value="F:transferase activity"/>
    <property type="evidence" value="ECO:0007669"/>
    <property type="project" value="UniProtKB-ARBA"/>
</dbReference>
<dbReference type="GO" id="GO:0000049">
    <property type="term" value="F:tRNA binding"/>
    <property type="evidence" value="ECO:0007669"/>
    <property type="project" value="UniProtKB-KW"/>
</dbReference>
<dbReference type="GO" id="GO:0008270">
    <property type="term" value="F:zinc ion binding"/>
    <property type="evidence" value="ECO:0007669"/>
    <property type="project" value="UniProtKB-UniRule"/>
</dbReference>
<dbReference type="GO" id="GO:0006419">
    <property type="term" value="P:alanyl-tRNA aminoacylation"/>
    <property type="evidence" value="ECO:0007669"/>
    <property type="project" value="UniProtKB-UniRule"/>
</dbReference>
<dbReference type="CDD" id="cd00673">
    <property type="entry name" value="AlaRS_core"/>
    <property type="match status" value="1"/>
</dbReference>
<dbReference type="FunFam" id="2.40.30.130:FF:000001">
    <property type="entry name" value="Alanine--tRNA ligase"/>
    <property type="match status" value="1"/>
</dbReference>
<dbReference type="FunFam" id="3.10.310.40:FF:000001">
    <property type="entry name" value="Alanine--tRNA ligase"/>
    <property type="match status" value="1"/>
</dbReference>
<dbReference type="FunFam" id="3.30.54.20:FF:000001">
    <property type="entry name" value="Alanine--tRNA ligase"/>
    <property type="match status" value="1"/>
</dbReference>
<dbReference type="FunFam" id="3.30.930.10:FF:000046">
    <property type="entry name" value="Alanine--tRNA ligase"/>
    <property type="match status" value="1"/>
</dbReference>
<dbReference type="FunFam" id="3.30.980.10:FF:000004">
    <property type="entry name" value="Alanine--tRNA ligase, cytoplasmic"/>
    <property type="match status" value="1"/>
</dbReference>
<dbReference type="Gene3D" id="2.40.30.130">
    <property type="match status" value="1"/>
</dbReference>
<dbReference type="Gene3D" id="3.10.310.40">
    <property type="match status" value="1"/>
</dbReference>
<dbReference type="Gene3D" id="3.30.54.20">
    <property type="match status" value="1"/>
</dbReference>
<dbReference type="Gene3D" id="6.10.250.550">
    <property type="match status" value="1"/>
</dbReference>
<dbReference type="Gene3D" id="3.30.930.10">
    <property type="entry name" value="Bira Bifunctional Protein, Domain 2"/>
    <property type="match status" value="1"/>
</dbReference>
<dbReference type="Gene3D" id="3.30.980.10">
    <property type="entry name" value="Threonyl-trna Synthetase, Chain A, domain 2"/>
    <property type="match status" value="1"/>
</dbReference>
<dbReference type="HAMAP" id="MF_00036_B">
    <property type="entry name" value="Ala_tRNA_synth_B"/>
    <property type="match status" value="1"/>
</dbReference>
<dbReference type="InterPro" id="IPR045864">
    <property type="entry name" value="aa-tRNA-synth_II/BPL/LPL"/>
</dbReference>
<dbReference type="InterPro" id="IPR002318">
    <property type="entry name" value="Ala-tRNA-lgiase_IIc"/>
</dbReference>
<dbReference type="InterPro" id="IPR018162">
    <property type="entry name" value="Ala-tRNA-ligase_IIc_anticod-bd"/>
</dbReference>
<dbReference type="InterPro" id="IPR018165">
    <property type="entry name" value="Ala-tRNA-synth_IIc_core"/>
</dbReference>
<dbReference type="InterPro" id="IPR018164">
    <property type="entry name" value="Ala-tRNA-synth_IIc_N"/>
</dbReference>
<dbReference type="InterPro" id="IPR050058">
    <property type="entry name" value="Ala-tRNA_ligase"/>
</dbReference>
<dbReference type="InterPro" id="IPR023033">
    <property type="entry name" value="Ala_tRNA_ligase_euk/bac"/>
</dbReference>
<dbReference type="InterPro" id="IPR003156">
    <property type="entry name" value="DHHA1_dom"/>
</dbReference>
<dbReference type="InterPro" id="IPR018163">
    <property type="entry name" value="Thr/Ala-tRNA-synth_IIc_edit"/>
</dbReference>
<dbReference type="InterPro" id="IPR009000">
    <property type="entry name" value="Transl_B-barrel_sf"/>
</dbReference>
<dbReference type="InterPro" id="IPR012947">
    <property type="entry name" value="tRNA_SAD"/>
</dbReference>
<dbReference type="NCBIfam" id="TIGR00344">
    <property type="entry name" value="alaS"/>
    <property type="match status" value="1"/>
</dbReference>
<dbReference type="PANTHER" id="PTHR11777:SF9">
    <property type="entry name" value="ALANINE--TRNA LIGASE, CYTOPLASMIC"/>
    <property type="match status" value="1"/>
</dbReference>
<dbReference type="PANTHER" id="PTHR11777">
    <property type="entry name" value="ALANYL-TRNA SYNTHETASE"/>
    <property type="match status" value="1"/>
</dbReference>
<dbReference type="Pfam" id="PF02272">
    <property type="entry name" value="DHHA1"/>
    <property type="match status" value="1"/>
</dbReference>
<dbReference type="Pfam" id="PF01411">
    <property type="entry name" value="tRNA-synt_2c"/>
    <property type="match status" value="1"/>
</dbReference>
<dbReference type="Pfam" id="PF07973">
    <property type="entry name" value="tRNA_SAD"/>
    <property type="match status" value="1"/>
</dbReference>
<dbReference type="PRINTS" id="PR00980">
    <property type="entry name" value="TRNASYNTHALA"/>
</dbReference>
<dbReference type="SMART" id="SM00863">
    <property type="entry name" value="tRNA_SAD"/>
    <property type="match status" value="1"/>
</dbReference>
<dbReference type="SUPFAM" id="SSF55681">
    <property type="entry name" value="Class II aaRS and biotin synthetases"/>
    <property type="match status" value="1"/>
</dbReference>
<dbReference type="SUPFAM" id="SSF101353">
    <property type="entry name" value="Putative anticodon-binding domain of alanyl-tRNA synthetase (AlaRS)"/>
    <property type="match status" value="1"/>
</dbReference>
<dbReference type="SUPFAM" id="SSF55186">
    <property type="entry name" value="ThrRS/AlaRS common domain"/>
    <property type="match status" value="1"/>
</dbReference>
<dbReference type="SUPFAM" id="SSF50447">
    <property type="entry name" value="Translation proteins"/>
    <property type="match status" value="1"/>
</dbReference>
<dbReference type="PROSITE" id="PS50860">
    <property type="entry name" value="AA_TRNA_LIGASE_II_ALA"/>
    <property type="match status" value="1"/>
</dbReference>
<name>SYA_BACAH</name>
<protein>
    <recommendedName>
        <fullName evidence="1">Alanine--tRNA ligase</fullName>
        <ecNumber evidence="1">6.1.1.7</ecNumber>
    </recommendedName>
    <alternativeName>
        <fullName evidence="1">Alanyl-tRNA synthetase</fullName>
        <shortName evidence="1">AlaRS</shortName>
    </alternativeName>
</protein>
<evidence type="ECO:0000255" key="1">
    <source>
        <dbReference type="HAMAP-Rule" id="MF_00036"/>
    </source>
</evidence>
<keyword id="KW-0030">Aminoacyl-tRNA synthetase</keyword>
<keyword id="KW-0067">ATP-binding</keyword>
<keyword id="KW-0963">Cytoplasm</keyword>
<keyword id="KW-0436">Ligase</keyword>
<keyword id="KW-0479">Metal-binding</keyword>
<keyword id="KW-0547">Nucleotide-binding</keyword>
<keyword id="KW-0648">Protein biosynthesis</keyword>
<keyword id="KW-0694">RNA-binding</keyword>
<keyword id="KW-0820">tRNA-binding</keyword>
<keyword id="KW-0862">Zinc</keyword>
<reference key="1">
    <citation type="journal article" date="2007" name="J. Bacteriol.">
        <title>The complete genome sequence of Bacillus thuringiensis Al Hakam.</title>
        <authorList>
            <person name="Challacombe J.F."/>
            <person name="Altherr M.R."/>
            <person name="Xie G."/>
            <person name="Bhotika S.S."/>
            <person name="Brown N."/>
            <person name="Bruce D."/>
            <person name="Campbell C.S."/>
            <person name="Campbell M.L."/>
            <person name="Chen J."/>
            <person name="Chertkov O."/>
            <person name="Cleland C."/>
            <person name="Dimitrijevic M."/>
            <person name="Doggett N.A."/>
            <person name="Fawcett J.J."/>
            <person name="Glavina T."/>
            <person name="Goodwin L.A."/>
            <person name="Green L.D."/>
            <person name="Han C.S."/>
            <person name="Hill K.K."/>
            <person name="Hitchcock P."/>
            <person name="Jackson P.J."/>
            <person name="Keim P."/>
            <person name="Kewalramani A.R."/>
            <person name="Longmire J."/>
            <person name="Lucas S."/>
            <person name="Malfatti S."/>
            <person name="Martinez D."/>
            <person name="McMurry K."/>
            <person name="Meincke L.J."/>
            <person name="Misra M."/>
            <person name="Moseman B.L."/>
            <person name="Mundt M."/>
            <person name="Munk A.C."/>
            <person name="Okinaka R.T."/>
            <person name="Parson-Quintana B."/>
            <person name="Reilly L.P."/>
            <person name="Richardson P."/>
            <person name="Robinson D.L."/>
            <person name="Saunders E."/>
            <person name="Tapia R."/>
            <person name="Tesmer J.G."/>
            <person name="Thayer N."/>
            <person name="Thompson L.S."/>
            <person name="Tice H."/>
            <person name="Ticknor L.O."/>
            <person name="Wills P.L."/>
            <person name="Gilna P."/>
            <person name="Brettin T.S."/>
        </authorList>
    </citation>
    <scope>NUCLEOTIDE SEQUENCE [LARGE SCALE GENOMIC DNA]</scope>
    <source>
        <strain>Al Hakam</strain>
    </source>
</reference>
<proteinExistence type="inferred from homology"/>